<keyword id="KW-0963">Cytoplasm</keyword>
<keyword id="KW-0396">Initiation factor</keyword>
<keyword id="KW-0648">Protein biosynthesis</keyword>
<keyword id="KW-0694">RNA-binding</keyword>
<keyword id="KW-0699">rRNA-binding</keyword>
<gene>
    <name evidence="1" type="primary">infA</name>
    <name type="ordered locus">BH14140</name>
</gene>
<proteinExistence type="inferred from homology"/>
<comment type="function">
    <text evidence="1">One of the essential components for the initiation of protein synthesis. Stabilizes the binding of IF-2 and IF-3 on the 30S subunit to which N-formylmethionyl-tRNA(fMet) subsequently binds. Helps modulate mRNA selection, yielding the 30S pre-initiation complex (PIC). Upon addition of the 50S ribosomal subunit IF-1, IF-2 and IF-3 are released leaving the mature 70S translation initiation complex.</text>
</comment>
<comment type="subunit">
    <text evidence="1">Component of the 30S ribosomal translation pre-initiation complex which assembles on the 30S ribosome in the order IF-2 and IF-3, IF-1 and N-formylmethionyl-tRNA(fMet); mRNA recruitment can occur at any time during PIC assembly.</text>
</comment>
<comment type="subcellular location">
    <subcellularLocation>
        <location evidence="1">Cytoplasm</location>
    </subcellularLocation>
</comment>
<comment type="similarity">
    <text evidence="1">Belongs to the IF-1 family.</text>
</comment>
<dbReference type="EMBL" id="BX897699">
    <property type="protein sequence ID" value="CAF28179.1"/>
    <property type="molecule type" value="Genomic_DNA"/>
</dbReference>
<dbReference type="RefSeq" id="WP_004856585.1">
    <property type="nucleotide sequence ID" value="NZ_LRIJ02000001.1"/>
</dbReference>
<dbReference type="SMR" id="Q6G252"/>
<dbReference type="PaxDb" id="283166-BH14140"/>
<dbReference type="EnsemblBacteria" id="CAF28179">
    <property type="protein sequence ID" value="CAF28179"/>
    <property type="gene ID" value="BH14140"/>
</dbReference>
<dbReference type="GeneID" id="92986023"/>
<dbReference type="KEGG" id="bhe:BH14140"/>
<dbReference type="eggNOG" id="COG0361">
    <property type="taxonomic scope" value="Bacteria"/>
</dbReference>
<dbReference type="OrthoDB" id="9803250at2"/>
<dbReference type="Proteomes" id="UP000000421">
    <property type="component" value="Chromosome"/>
</dbReference>
<dbReference type="GO" id="GO:0005829">
    <property type="term" value="C:cytosol"/>
    <property type="evidence" value="ECO:0007669"/>
    <property type="project" value="TreeGrafter"/>
</dbReference>
<dbReference type="GO" id="GO:0043022">
    <property type="term" value="F:ribosome binding"/>
    <property type="evidence" value="ECO:0007669"/>
    <property type="project" value="UniProtKB-UniRule"/>
</dbReference>
<dbReference type="GO" id="GO:0019843">
    <property type="term" value="F:rRNA binding"/>
    <property type="evidence" value="ECO:0007669"/>
    <property type="project" value="UniProtKB-UniRule"/>
</dbReference>
<dbReference type="GO" id="GO:0003743">
    <property type="term" value="F:translation initiation factor activity"/>
    <property type="evidence" value="ECO:0007669"/>
    <property type="project" value="UniProtKB-UniRule"/>
</dbReference>
<dbReference type="CDD" id="cd04451">
    <property type="entry name" value="S1_IF1"/>
    <property type="match status" value="1"/>
</dbReference>
<dbReference type="FunFam" id="2.40.50.140:FF:000002">
    <property type="entry name" value="Translation initiation factor IF-1"/>
    <property type="match status" value="1"/>
</dbReference>
<dbReference type="Gene3D" id="2.40.50.140">
    <property type="entry name" value="Nucleic acid-binding proteins"/>
    <property type="match status" value="1"/>
</dbReference>
<dbReference type="HAMAP" id="MF_00075">
    <property type="entry name" value="IF_1"/>
    <property type="match status" value="1"/>
</dbReference>
<dbReference type="InterPro" id="IPR012340">
    <property type="entry name" value="NA-bd_OB-fold"/>
</dbReference>
<dbReference type="InterPro" id="IPR006196">
    <property type="entry name" value="RNA-binding_domain_S1_IF1"/>
</dbReference>
<dbReference type="InterPro" id="IPR004368">
    <property type="entry name" value="TIF_IF1"/>
</dbReference>
<dbReference type="NCBIfam" id="TIGR00008">
    <property type="entry name" value="infA"/>
    <property type="match status" value="1"/>
</dbReference>
<dbReference type="PANTHER" id="PTHR33370">
    <property type="entry name" value="TRANSLATION INITIATION FACTOR IF-1, CHLOROPLASTIC"/>
    <property type="match status" value="1"/>
</dbReference>
<dbReference type="PANTHER" id="PTHR33370:SF1">
    <property type="entry name" value="TRANSLATION INITIATION FACTOR IF-1, CHLOROPLASTIC"/>
    <property type="match status" value="1"/>
</dbReference>
<dbReference type="Pfam" id="PF01176">
    <property type="entry name" value="eIF-1a"/>
    <property type="match status" value="1"/>
</dbReference>
<dbReference type="SUPFAM" id="SSF50249">
    <property type="entry name" value="Nucleic acid-binding proteins"/>
    <property type="match status" value="1"/>
</dbReference>
<dbReference type="PROSITE" id="PS50832">
    <property type="entry name" value="S1_IF1_TYPE"/>
    <property type="match status" value="1"/>
</dbReference>
<accession>Q6G252</accession>
<protein>
    <recommendedName>
        <fullName evidence="1">Translation initiation factor IF-1</fullName>
    </recommendedName>
</protein>
<name>IF1_BARHE</name>
<reference key="1">
    <citation type="journal article" date="2004" name="Proc. Natl. Acad. Sci. U.S.A.">
        <title>The louse-borne human pathogen Bartonella quintana is a genomic derivative of the zoonotic agent Bartonella henselae.</title>
        <authorList>
            <person name="Alsmark U.C.M."/>
            <person name="Frank A.C."/>
            <person name="Karlberg E.O."/>
            <person name="Legault B.-A."/>
            <person name="Ardell D.H."/>
            <person name="Canbaeck B."/>
            <person name="Eriksson A.-S."/>
            <person name="Naeslund A.K."/>
            <person name="Handley S.A."/>
            <person name="Huvet M."/>
            <person name="La Scola B."/>
            <person name="Holmberg M."/>
            <person name="Andersson S.G.E."/>
        </authorList>
    </citation>
    <scope>NUCLEOTIDE SEQUENCE [LARGE SCALE GENOMIC DNA]</scope>
    <source>
        <strain>ATCC 49882 / DSM 28221 / CCUG 30454 / Houston 1</strain>
    </source>
</reference>
<sequence length="72" mass="8438">MSKEEVLEFSGIVTELLPNAMFRVKLENDHEIIAHTAGRMRKNRIRVLAGDKIMVEMTPYDLTKGRIIYRYK</sequence>
<evidence type="ECO:0000255" key="1">
    <source>
        <dbReference type="HAMAP-Rule" id="MF_00075"/>
    </source>
</evidence>
<feature type="chain" id="PRO_0000095740" description="Translation initiation factor IF-1">
    <location>
        <begin position="1"/>
        <end position="72"/>
    </location>
</feature>
<feature type="domain" description="S1-like" evidence="1">
    <location>
        <begin position="1"/>
        <end position="72"/>
    </location>
</feature>
<organism>
    <name type="scientific">Bartonella henselae (strain ATCC 49882 / DSM 28221 / CCUG 30454 / Houston 1)</name>
    <name type="common">Rochalimaea henselae</name>
    <dbReference type="NCBI Taxonomy" id="283166"/>
    <lineage>
        <taxon>Bacteria</taxon>
        <taxon>Pseudomonadati</taxon>
        <taxon>Pseudomonadota</taxon>
        <taxon>Alphaproteobacteria</taxon>
        <taxon>Hyphomicrobiales</taxon>
        <taxon>Bartonellaceae</taxon>
        <taxon>Bartonella</taxon>
    </lineage>
</organism>